<gene>
    <name evidence="1" type="primary">hslV</name>
    <name type="ordered locus">RHOS4_01040</name>
    <name type="ORF">RSP_1531</name>
</gene>
<reference key="1">
    <citation type="submission" date="2005-09" db="EMBL/GenBank/DDBJ databases">
        <title>Complete sequence of chromosome 1 of Rhodobacter sphaeroides 2.4.1.</title>
        <authorList>
            <person name="Copeland A."/>
            <person name="Lucas S."/>
            <person name="Lapidus A."/>
            <person name="Barry K."/>
            <person name="Detter J.C."/>
            <person name="Glavina T."/>
            <person name="Hammon N."/>
            <person name="Israni S."/>
            <person name="Pitluck S."/>
            <person name="Richardson P."/>
            <person name="Mackenzie C."/>
            <person name="Choudhary M."/>
            <person name="Larimer F."/>
            <person name="Hauser L.J."/>
            <person name="Land M."/>
            <person name="Donohue T.J."/>
            <person name="Kaplan S."/>
        </authorList>
    </citation>
    <scope>NUCLEOTIDE SEQUENCE [LARGE SCALE GENOMIC DNA]</scope>
    <source>
        <strain>ATCC 17023 / DSM 158 / JCM 6121 / CCUG 31486 / LMG 2827 / NBRC 12203 / NCIMB 8253 / ATH 2.4.1.</strain>
    </source>
</reference>
<proteinExistence type="inferred from homology"/>
<protein>
    <recommendedName>
        <fullName evidence="1">ATP-dependent protease subunit HslV</fullName>
        <ecNumber evidence="1">3.4.25.2</ecNumber>
    </recommendedName>
</protein>
<name>HSLV_CERS4</name>
<comment type="function">
    <text evidence="1">Protease subunit of a proteasome-like degradation complex believed to be a general protein degrading machinery.</text>
</comment>
<comment type="catalytic activity">
    <reaction evidence="1">
        <text>ATP-dependent cleavage of peptide bonds with broad specificity.</text>
        <dbReference type="EC" id="3.4.25.2"/>
    </reaction>
</comment>
<comment type="activity regulation">
    <text evidence="1">Allosterically activated by HslU binding.</text>
</comment>
<comment type="subunit">
    <text evidence="1">A double ring-shaped homohexamer of HslV is capped on each side by a ring-shaped HslU homohexamer. The assembly of the HslU/HslV complex is dependent on binding of ATP.</text>
</comment>
<comment type="subcellular location">
    <subcellularLocation>
        <location evidence="1">Cytoplasm</location>
    </subcellularLocation>
</comment>
<comment type="similarity">
    <text evidence="1">Belongs to the peptidase T1B family. HslV subfamily.</text>
</comment>
<accession>Q3J6B2</accession>
<keyword id="KW-0021">Allosteric enzyme</keyword>
<keyword id="KW-0963">Cytoplasm</keyword>
<keyword id="KW-0378">Hydrolase</keyword>
<keyword id="KW-0479">Metal-binding</keyword>
<keyword id="KW-0645">Protease</keyword>
<keyword id="KW-1185">Reference proteome</keyword>
<keyword id="KW-0915">Sodium</keyword>
<keyword id="KW-0888">Threonine protease</keyword>
<evidence type="ECO:0000255" key="1">
    <source>
        <dbReference type="HAMAP-Rule" id="MF_00248"/>
    </source>
</evidence>
<organism>
    <name type="scientific">Cereibacter sphaeroides (strain ATCC 17023 / DSM 158 / JCM 6121 / CCUG 31486 / LMG 2827 / NBRC 12203 / NCIMB 8253 / ATH 2.4.1.)</name>
    <name type="common">Rhodobacter sphaeroides</name>
    <dbReference type="NCBI Taxonomy" id="272943"/>
    <lineage>
        <taxon>Bacteria</taxon>
        <taxon>Pseudomonadati</taxon>
        <taxon>Pseudomonadota</taxon>
        <taxon>Alphaproteobacteria</taxon>
        <taxon>Rhodobacterales</taxon>
        <taxon>Paracoccaceae</taxon>
        <taxon>Cereibacter</taxon>
    </lineage>
</organism>
<dbReference type="EC" id="3.4.25.2" evidence="1"/>
<dbReference type="EMBL" id="CP000143">
    <property type="protein sequence ID" value="ABA77672.1"/>
    <property type="molecule type" value="Genomic_DNA"/>
</dbReference>
<dbReference type="RefSeq" id="WP_002722250.1">
    <property type="nucleotide sequence ID" value="NZ_CP030271.1"/>
</dbReference>
<dbReference type="RefSeq" id="YP_351573.1">
    <property type="nucleotide sequence ID" value="NC_007493.2"/>
</dbReference>
<dbReference type="SMR" id="Q3J6B2"/>
<dbReference type="STRING" id="272943.RSP_1531"/>
<dbReference type="MEROPS" id="T01.006"/>
<dbReference type="EnsemblBacteria" id="ABA77672">
    <property type="protein sequence ID" value="ABA77672"/>
    <property type="gene ID" value="RSP_1531"/>
</dbReference>
<dbReference type="GeneID" id="3718654"/>
<dbReference type="KEGG" id="rsp:RSP_1531"/>
<dbReference type="PATRIC" id="fig|272943.9.peg.402"/>
<dbReference type="eggNOG" id="COG5405">
    <property type="taxonomic scope" value="Bacteria"/>
</dbReference>
<dbReference type="OrthoDB" id="9804884at2"/>
<dbReference type="PhylomeDB" id="Q3J6B2"/>
<dbReference type="Proteomes" id="UP000002703">
    <property type="component" value="Chromosome 1"/>
</dbReference>
<dbReference type="GO" id="GO:0009376">
    <property type="term" value="C:HslUV protease complex"/>
    <property type="evidence" value="ECO:0007669"/>
    <property type="project" value="UniProtKB-UniRule"/>
</dbReference>
<dbReference type="GO" id="GO:0005839">
    <property type="term" value="C:proteasome core complex"/>
    <property type="evidence" value="ECO:0007669"/>
    <property type="project" value="InterPro"/>
</dbReference>
<dbReference type="GO" id="GO:0046872">
    <property type="term" value="F:metal ion binding"/>
    <property type="evidence" value="ECO:0007669"/>
    <property type="project" value="UniProtKB-KW"/>
</dbReference>
<dbReference type="GO" id="GO:0004298">
    <property type="term" value="F:threonine-type endopeptidase activity"/>
    <property type="evidence" value="ECO:0007669"/>
    <property type="project" value="UniProtKB-KW"/>
</dbReference>
<dbReference type="GO" id="GO:0051603">
    <property type="term" value="P:proteolysis involved in protein catabolic process"/>
    <property type="evidence" value="ECO:0007669"/>
    <property type="project" value="InterPro"/>
</dbReference>
<dbReference type="CDD" id="cd01913">
    <property type="entry name" value="protease_HslV"/>
    <property type="match status" value="1"/>
</dbReference>
<dbReference type="Gene3D" id="3.60.20.10">
    <property type="entry name" value="Glutamine Phosphoribosylpyrophosphate, subunit 1, domain 1"/>
    <property type="match status" value="1"/>
</dbReference>
<dbReference type="HAMAP" id="MF_00248">
    <property type="entry name" value="HslV"/>
    <property type="match status" value="1"/>
</dbReference>
<dbReference type="InterPro" id="IPR022281">
    <property type="entry name" value="ATP-dep_Prtase_HsIV_su"/>
</dbReference>
<dbReference type="InterPro" id="IPR029055">
    <property type="entry name" value="Ntn_hydrolases_N"/>
</dbReference>
<dbReference type="InterPro" id="IPR001353">
    <property type="entry name" value="Proteasome_sua/b"/>
</dbReference>
<dbReference type="InterPro" id="IPR023333">
    <property type="entry name" value="Proteasome_suB-type"/>
</dbReference>
<dbReference type="NCBIfam" id="TIGR03692">
    <property type="entry name" value="ATP_dep_HslV"/>
    <property type="match status" value="1"/>
</dbReference>
<dbReference type="NCBIfam" id="NF003964">
    <property type="entry name" value="PRK05456.1"/>
    <property type="match status" value="1"/>
</dbReference>
<dbReference type="PANTHER" id="PTHR32194:SF7">
    <property type="entry name" value="ATP-DEPENDENT PROTEASE SUBUNIT HSLV"/>
    <property type="match status" value="1"/>
</dbReference>
<dbReference type="PANTHER" id="PTHR32194">
    <property type="entry name" value="METALLOPROTEASE TLDD"/>
    <property type="match status" value="1"/>
</dbReference>
<dbReference type="Pfam" id="PF00227">
    <property type="entry name" value="Proteasome"/>
    <property type="match status" value="1"/>
</dbReference>
<dbReference type="PIRSF" id="PIRSF039093">
    <property type="entry name" value="HslV"/>
    <property type="match status" value="1"/>
</dbReference>
<dbReference type="SUPFAM" id="SSF56235">
    <property type="entry name" value="N-terminal nucleophile aminohydrolases (Ntn hydrolases)"/>
    <property type="match status" value="1"/>
</dbReference>
<dbReference type="PROSITE" id="PS51476">
    <property type="entry name" value="PROTEASOME_BETA_2"/>
    <property type="match status" value="1"/>
</dbReference>
<sequence length="185" mass="19541">MAEDRFPGWHGTTILAVRRGGEVVVAGDGQVSLGQTVIKGTARKVRRLSPGGHEVVAGFAGSTADAFTLLERLEKKLEAAPGQLARACVELAKDWRMDKYLRNLEAMLIVTDGETLLVLTGAGDVLEPEHDVTAIGSGGNFALAAARGLMATDLPAEEIARKAMAIAADICVYTNGNLTVERISK</sequence>
<feature type="chain" id="PRO_0000336790" description="ATP-dependent protease subunit HslV">
    <location>
        <begin position="1"/>
        <end position="185"/>
    </location>
</feature>
<feature type="active site" evidence="1">
    <location>
        <position position="12"/>
    </location>
</feature>
<feature type="binding site" evidence="1">
    <location>
        <position position="168"/>
    </location>
    <ligand>
        <name>Na(+)</name>
        <dbReference type="ChEBI" id="CHEBI:29101"/>
    </ligand>
</feature>
<feature type="binding site" evidence="1">
    <location>
        <position position="171"/>
    </location>
    <ligand>
        <name>Na(+)</name>
        <dbReference type="ChEBI" id="CHEBI:29101"/>
    </ligand>
</feature>
<feature type="binding site" evidence="1">
    <location>
        <position position="174"/>
    </location>
    <ligand>
        <name>Na(+)</name>
        <dbReference type="ChEBI" id="CHEBI:29101"/>
    </ligand>
</feature>